<protein>
    <recommendedName>
        <fullName>Nascent polypeptide-associated complex subunit beta</fullName>
        <shortName>NAC-beta</shortName>
    </recommendedName>
    <alternativeName>
        <fullName>Beta-NAC</fullName>
    </alternativeName>
</protein>
<accession>Q6FKD1</accession>
<reference key="1">
    <citation type="journal article" date="2004" name="Nature">
        <title>Genome evolution in yeasts.</title>
        <authorList>
            <person name="Dujon B."/>
            <person name="Sherman D."/>
            <person name="Fischer G."/>
            <person name="Durrens P."/>
            <person name="Casaregola S."/>
            <person name="Lafontaine I."/>
            <person name="de Montigny J."/>
            <person name="Marck C."/>
            <person name="Neuveglise C."/>
            <person name="Talla E."/>
            <person name="Goffard N."/>
            <person name="Frangeul L."/>
            <person name="Aigle M."/>
            <person name="Anthouard V."/>
            <person name="Babour A."/>
            <person name="Barbe V."/>
            <person name="Barnay S."/>
            <person name="Blanchin S."/>
            <person name="Beckerich J.-M."/>
            <person name="Beyne E."/>
            <person name="Bleykasten C."/>
            <person name="Boisrame A."/>
            <person name="Boyer J."/>
            <person name="Cattolico L."/>
            <person name="Confanioleri F."/>
            <person name="de Daruvar A."/>
            <person name="Despons L."/>
            <person name="Fabre E."/>
            <person name="Fairhead C."/>
            <person name="Ferry-Dumazet H."/>
            <person name="Groppi A."/>
            <person name="Hantraye F."/>
            <person name="Hennequin C."/>
            <person name="Jauniaux N."/>
            <person name="Joyet P."/>
            <person name="Kachouri R."/>
            <person name="Kerrest A."/>
            <person name="Koszul R."/>
            <person name="Lemaire M."/>
            <person name="Lesur I."/>
            <person name="Ma L."/>
            <person name="Muller H."/>
            <person name="Nicaud J.-M."/>
            <person name="Nikolski M."/>
            <person name="Oztas S."/>
            <person name="Ozier-Kalogeropoulos O."/>
            <person name="Pellenz S."/>
            <person name="Potier S."/>
            <person name="Richard G.-F."/>
            <person name="Straub M.-L."/>
            <person name="Suleau A."/>
            <person name="Swennen D."/>
            <person name="Tekaia F."/>
            <person name="Wesolowski-Louvel M."/>
            <person name="Westhof E."/>
            <person name="Wirth B."/>
            <person name="Zeniou-Meyer M."/>
            <person name="Zivanovic Y."/>
            <person name="Bolotin-Fukuhara M."/>
            <person name="Thierry A."/>
            <person name="Bouchier C."/>
            <person name="Caudron B."/>
            <person name="Scarpelli C."/>
            <person name="Gaillardin C."/>
            <person name="Weissenbach J."/>
            <person name="Wincker P."/>
            <person name="Souciet J.-L."/>
        </authorList>
    </citation>
    <scope>NUCLEOTIDE SEQUENCE [LARGE SCALE GENOMIC DNA]</scope>
    <source>
        <strain>ATCC 2001 / BCRC 20586 / JCM 3761 / NBRC 0622 / NRRL Y-65 / CBS 138</strain>
    </source>
</reference>
<keyword id="KW-0963">Cytoplasm</keyword>
<keyword id="KW-0539">Nucleus</keyword>
<keyword id="KW-0653">Protein transport</keyword>
<keyword id="KW-1185">Reference proteome</keyword>
<keyword id="KW-0678">Repressor</keyword>
<keyword id="KW-0804">Transcription</keyword>
<keyword id="KW-0805">Transcription regulation</keyword>
<keyword id="KW-0813">Transport</keyword>
<evidence type="ECO:0000250" key="1"/>
<evidence type="ECO:0000255" key="2">
    <source>
        <dbReference type="PROSITE-ProRule" id="PRU00507"/>
    </source>
</evidence>
<evidence type="ECO:0000256" key="3">
    <source>
        <dbReference type="SAM" id="MobiDB-lite"/>
    </source>
</evidence>
<evidence type="ECO:0000305" key="4"/>
<organism>
    <name type="scientific">Candida glabrata (strain ATCC 2001 / BCRC 20586 / JCM 3761 / NBRC 0622 / NRRL Y-65 / CBS 138)</name>
    <name type="common">Yeast</name>
    <name type="synonym">Nakaseomyces glabratus</name>
    <dbReference type="NCBI Taxonomy" id="284593"/>
    <lineage>
        <taxon>Eukaryota</taxon>
        <taxon>Fungi</taxon>
        <taxon>Dikarya</taxon>
        <taxon>Ascomycota</taxon>
        <taxon>Saccharomycotina</taxon>
        <taxon>Saccharomycetes</taxon>
        <taxon>Saccharomycetales</taxon>
        <taxon>Saccharomycetaceae</taxon>
        <taxon>Nakaseomyces</taxon>
    </lineage>
</organism>
<comment type="function">
    <text evidence="1">Component of the nascent polypeptide-associated complex (NAC), a dynamic component of the ribosomal exit tunnel, protecting the emerging polypeptides from interaction with other cytoplasmic proteins to ensure appropriate nascent protein targeting. The NAC complex also promotes mitochondrial protein import by enhancing productive ribosome interactions with the outer mitochondrial membrane and blocks the inappropriate interaction of ribosomes translating non-secretory nascent polypeptides with translocation sites in the membrane of the endoplasmic reticulum. EGD1 may act as a transcription factor that exert a negative effect on the expression of several genes that are transcribed by RNA polymerase II.</text>
</comment>
<comment type="subunit">
    <text evidence="1">Part of the nascent polypeptide-associated complex (NAC), consisting of EGD2 and EGD1. NAC associates with ribosomes via EGD1 (By similarity).</text>
</comment>
<comment type="subcellular location">
    <subcellularLocation>
        <location evidence="1">Cytoplasm</location>
    </subcellularLocation>
    <subcellularLocation>
        <location evidence="1">Nucleus</location>
    </subcellularLocation>
    <text evidence="1">Predominantly cytoplasmic, may also transiently localize to the nucleus.</text>
</comment>
<comment type="similarity">
    <text evidence="4">Belongs to the NAC-beta family.</text>
</comment>
<feature type="chain" id="PRO_0000273505" description="Nascent polypeptide-associated complex subunit beta">
    <location>
        <begin position="1"/>
        <end position="156"/>
    </location>
</feature>
<feature type="domain" description="NAC-A/B" evidence="2">
    <location>
        <begin position="38"/>
        <end position="103"/>
    </location>
</feature>
<feature type="region of interest" description="Disordered" evidence="3">
    <location>
        <begin position="1"/>
        <end position="42"/>
    </location>
</feature>
<feature type="region of interest" description="Disordered" evidence="3">
    <location>
        <begin position="129"/>
        <end position="156"/>
    </location>
</feature>
<name>NACB_CANGA</name>
<proteinExistence type="inferred from homology"/>
<dbReference type="EMBL" id="CR380958">
    <property type="protein sequence ID" value="CAG62287.1"/>
    <property type="molecule type" value="Genomic_DNA"/>
</dbReference>
<dbReference type="RefSeq" id="XP_449313.1">
    <property type="nucleotide sequence ID" value="XM_449313.1"/>
</dbReference>
<dbReference type="SMR" id="Q6FKD1"/>
<dbReference type="FunCoup" id="Q6FKD1">
    <property type="interactions" value="1262"/>
</dbReference>
<dbReference type="STRING" id="284593.Q6FKD1"/>
<dbReference type="EnsemblFungi" id="CAGL0L12540g-T">
    <property type="protein sequence ID" value="CAGL0L12540g-T-p1"/>
    <property type="gene ID" value="CAGL0L12540g"/>
</dbReference>
<dbReference type="KEGG" id="cgr:2890599"/>
<dbReference type="CGD" id="CAL0135912">
    <property type="gene designation" value="CAGL0L12540g"/>
</dbReference>
<dbReference type="VEuPathDB" id="FungiDB:B1J91_L12540g"/>
<dbReference type="VEuPathDB" id="FungiDB:CAGL0L12540g"/>
<dbReference type="eggNOG" id="KOG2240">
    <property type="taxonomic scope" value="Eukaryota"/>
</dbReference>
<dbReference type="HOGENOM" id="CLU_098726_2_2_1"/>
<dbReference type="InParanoid" id="Q6FKD1"/>
<dbReference type="OMA" id="RMQQSVR"/>
<dbReference type="Proteomes" id="UP000002428">
    <property type="component" value="Chromosome L"/>
</dbReference>
<dbReference type="GO" id="GO:0005854">
    <property type="term" value="C:nascent polypeptide-associated complex"/>
    <property type="evidence" value="ECO:0007669"/>
    <property type="project" value="EnsemblFungi"/>
</dbReference>
<dbReference type="GO" id="GO:0005634">
    <property type="term" value="C:nucleus"/>
    <property type="evidence" value="ECO:0007669"/>
    <property type="project" value="UniProtKB-SubCell"/>
</dbReference>
<dbReference type="GO" id="GO:0051082">
    <property type="term" value="F:unfolded protein binding"/>
    <property type="evidence" value="ECO:0007669"/>
    <property type="project" value="EnsemblFungi"/>
</dbReference>
<dbReference type="GO" id="GO:0006613">
    <property type="term" value="P:cotranslational protein targeting to membrane"/>
    <property type="evidence" value="ECO:0007669"/>
    <property type="project" value="EnsemblFungi"/>
</dbReference>
<dbReference type="GO" id="GO:0000423">
    <property type="term" value="P:mitophagy"/>
    <property type="evidence" value="ECO:0007669"/>
    <property type="project" value="EnsemblFungi"/>
</dbReference>
<dbReference type="GO" id="GO:0015031">
    <property type="term" value="P:protein transport"/>
    <property type="evidence" value="ECO:0007669"/>
    <property type="project" value="UniProtKB-KW"/>
</dbReference>
<dbReference type="CDD" id="cd22055">
    <property type="entry name" value="NAC_BTF3"/>
    <property type="match status" value="1"/>
</dbReference>
<dbReference type="FunFam" id="2.20.70.30:FF:000001">
    <property type="entry name" value="Transcription factor BTF3 homolog"/>
    <property type="match status" value="1"/>
</dbReference>
<dbReference type="Gene3D" id="2.20.70.30">
    <property type="entry name" value="Nascent polypeptide-associated complex domain"/>
    <property type="match status" value="1"/>
</dbReference>
<dbReference type="InterPro" id="IPR039370">
    <property type="entry name" value="BTF3"/>
</dbReference>
<dbReference type="InterPro" id="IPR038187">
    <property type="entry name" value="NAC_A/B_dom_sf"/>
</dbReference>
<dbReference type="InterPro" id="IPR002715">
    <property type="entry name" value="Nas_poly-pep-assoc_cplx_dom"/>
</dbReference>
<dbReference type="PANTHER" id="PTHR10351">
    <property type="entry name" value="TRANSCRIPTION FACTOR BTF3 FAMILY MEMBER"/>
    <property type="match status" value="1"/>
</dbReference>
<dbReference type="Pfam" id="PF01849">
    <property type="entry name" value="NAC"/>
    <property type="match status" value="1"/>
</dbReference>
<dbReference type="SMART" id="SM01407">
    <property type="entry name" value="NAC"/>
    <property type="match status" value="1"/>
</dbReference>
<dbReference type="PROSITE" id="PS51151">
    <property type="entry name" value="NAC_AB"/>
    <property type="match status" value="1"/>
</dbReference>
<sequence>MPIDQEKLAKLQKMSAGNKVGGTRRKQAKKTGSGSAGNKDDTKLHNQLAKLHAVTIDNVAEANFFKDDGKVLHFNKVGVQVAPQHNTSVFYGMAQEKNLQELFPGIISQLGGEAIQALSQLAAQMEKAQANENAGEAKDEAIPELVEGQSFDAEVE</sequence>
<gene>
    <name type="primary">EGD1</name>
    <name type="ordered locus">CAGL0L12540g</name>
</gene>